<feature type="chain" id="PRO_0000429591" description="Succinyl-CoA--L-malate CoA-transferase alpha subunit">
    <location>
        <begin position="1"/>
        <end position="428"/>
    </location>
</feature>
<feature type="region of interest" description="Disordered" evidence="2">
    <location>
        <begin position="1"/>
        <end position="31"/>
    </location>
</feature>
<feature type="compositionally biased region" description="Polar residues" evidence="2">
    <location>
        <begin position="21"/>
        <end position="31"/>
    </location>
</feature>
<feature type="active site" description="Nucleophile" evidence="1">
    <location>
        <position position="200"/>
    </location>
</feature>
<comment type="function">
    <text evidence="3">Involved in the 3-hydroxypropionate cycle used for autotrophic carbon dioxide fixation. Catalyzes the transfer of CoA moiety from succinyl-CoA to L-malate to yield L-malyl-CoA. It is highly specific for succinyl-CoA as the CoA donor, however it can accept L-citramalate instead of L-malate as the CoA acceptor.</text>
</comment>
<comment type="catalytic activity">
    <reaction evidence="3">
        <text>succinyl-CoA + (S)-malate = (S)-malyl-CoA + succinate</text>
        <dbReference type="Rhea" id="RHEA:38255"/>
        <dbReference type="ChEBI" id="CHEBI:15589"/>
        <dbReference type="ChEBI" id="CHEBI:30031"/>
        <dbReference type="ChEBI" id="CHEBI:57292"/>
        <dbReference type="ChEBI" id="CHEBI:57317"/>
        <dbReference type="EC" id="2.8.3.22"/>
    </reaction>
</comment>
<comment type="catalytic activity">
    <reaction evidence="3">
        <text>(3S)-citramalate + succinyl-CoA = (3S)-citramalyl-CoA + succinate</text>
        <dbReference type="Rhea" id="RHEA:38287"/>
        <dbReference type="ChEBI" id="CHEBI:30031"/>
        <dbReference type="ChEBI" id="CHEBI:30936"/>
        <dbReference type="ChEBI" id="CHEBI:57292"/>
        <dbReference type="ChEBI" id="CHEBI:58668"/>
        <dbReference type="EC" id="2.8.3.22"/>
    </reaction>
</comment>
<comment type="biophysicochemical properties">
    <kinetics>
        <KM evidence="3">0.5 mM for succinyl-CoA</KM>
        <KM evidence="3">1.1 mM for L-citramalate</KM>
        <KM evidence="3">1.3 mM for L-malate</KM>
    </kinetics>
    <phDependence>
        <text evidence="3">Optimum pH is 6.5.</text>
    </phDependence>
    <temperatureDependence>
        <text evidence="3">Optimum temperature is 55 degrees Celsius.</text>
    </temperatureDependence>
</comment>
<comment type="subunit">
    <text evidence="3">Forms a large complex composed of six heterodimers (alpha, beta).</text>
</comment>
<comment type="induction">
    <text evidence="3">Under autotrophic growth conditions.</text>
</comment>
<comment type="similarity">
    <text evidence="4">Belongs to the CoA-transferase III family.</text>
</comment>
<organism>
    <name type="scientific">Chloroflexus aurantiacus</name>
    <dbReference type="NCBI Taxonomy" id="1108"/>
    <lineage>
        <taxon>Bacteria</taxon>
        <taxon>Bacillati</taxon>
        <taxon>Chloroflexota</taxon>
        <taxon>Chloroflexia</taxon>
        <taxon>Chloroflexales</taxon>
        <taxon>Chloroflexineae</taxon>
        <taxon>Chloroflexaceae</taxon>
        <taxon>Chloroflexus</taxon>
    </lineage>
</organism>
<proteinExistence type="evidence at protein level"/>
<sequence length="428" mass="46723">MPPTGEEPSGHAESKPPASDPMSTPGTGQEQLPLSGIRVIDVGNFLAGPYAASILGEFGAEVLKIEHPLGGDPMRRFGTATARHDATLAWLSEARNRKSVTIDLRQQEGVALFLKLVAKSDILIENFRPGTMEEWGLSWPVLQATNPGLIMLRVSGYGQTGPYRRRSGFAHIAHAFSGLSYLAGFPGETPVLPGTAPLGDYIASLFGAIGILIALRHKEQTGRGQLIDVGIYEAVFRILDEIAPAYGLFGKIREREGAGSFIAVPHGHFRSKDGKWVAIACTTDKMFERLAEAMERPELASPELYGDQRKRLAARDIVNQITIEWVGSLTRDEVMRRCLEKEVPVGPLNSIADMFNDEHFLARGNFACIEAEGIGEVVVPNVIPRLSETPGRVTNLGPPLGNATYEVLRELLDISAEEIKRLRSRKII</sequence>
<accession>Q1KLK1</accession>
<reference key="1">
    <citation type="journal article" date="2006" name="J. Bacteriol.">
        <title>Properties of succinyl-coenzyme A:L-malate coenzyme A transferase and its role in the autotrophic 3-hydroxypropionate cycle of Chloroflexus aurantiacus.</title>
        <authorList>
            <person name="Friedmann S."/>
            <person name="Steindorf A."/>
            <person name="Alber B.E."/>
            <person name="Fuchs G."/>
        </authorList>
    </citation>
    <scope>NUCLEOTIDE SEQUENCE [GENOMIC DNA]</scope>
    <scope>PROTEIN SEQUENCE OF 1-4</scope>
    <scope>FUNCTION</scope>
    <scope>CATALYTIC ACTIVITY</scope>
    <scope>BIOPHYSICOCHEMICAL PROPERTIES</scope>
    <scope>INDUCTION</scope>
    <scope>SUBSTRATE SPECIFICITY</scope>
    <scope>SUBUNIT</scope>
    <scope>NOMENCLATURE</scope>
    <source>
        <strain>DSM 636 / OK-70-fl</strain>
    </source>
</reference>
<protein>
    <recommendedName>
        <fullName>Succinyl-CoA--L-malate CoA-transferase alpha subunit</fullName>
        <ecNumber>2.8.3.22</ecNumber>
    </recommendedName>
</protein>
<evidence type="ECO:0000250" key="1"/>
<evidence type="ECO:0000256" key="2">
    <source>
        <dbReference type="SAM" id="MobiDB-lite"/>
    </source>
</evidence>
<evidence type="ECO:0000269" key="3">
    <source>
    </source>
</evidence>
<evidence type="ECO:0000305" key="4"/>
<keyword id="KW-0120">Carbon dioxide fixation</keyword>
<keyword id="KW-0903">Direct protein sequencing</keyword>
<keyword id="KW-0808">Transferase</keyword>
<dbReference type="EC" id="2.8.3.22"/>
<dbReference type="EMBL" id="DQ472736">
    <property type="protein sequence ID" value="ABF14399.1"/>
    <property type="molecule type" value="Genomic_DNA"/>
</dbReference>
<dbReference type="SMR" id="Q1KLK1"/>
<dbReference type="KEGG" id="ag:ABF14399"/>
<dbReference type="GO" id="GO:0008410">
    <property type="term" value="F:CoA-transferase activity"/>
    <property type="evidence" value="ECO:0000314"/>
    <property type="project" value="UniProtKB"/>
</dbReference>
<dbReference type="GO" id="GO:0047370">
    <property type="term" value="F:succinate-citramalate CoA-transferase activity"/>
    <property type="evidence" value="ECO:0007669"/>
    <property type="project" value="RHEA"/>
</dbReference>
<dbReference type="GO" id="GO:0043427">
    <property type="term" value="P:carbon fixation by 3-hydroxypropionate cycle"/>
    <property type="evidence" value="ECO:0000314"/>
    <property type="project" value="UniProtKB"/>
</dbReference>
<dbReference type="FunFam" id="3.30.1540.10:FF:000006">
    <property type="entry name" value="Succinyl-CoA--L-malate CoA-transferase beta subunit"/>
    <property type="match status" value="1"/>
</dbReference>
<dbReference type="Gene3D" id="3.40.50.10540">
    <property type="entry name" value="Crotonobetainyl-coa:carnitine coa-transferase, domain 1"/>
    <property type="match status" value="1"/>
</dbReference>
<dbReference type="Gene3D" id="3.30.1540.10">
    <property type="entry name" value="formyl-coa transferase, domain 3"/>
    <property type="match status" value="1"/>
</dbReference>
<dbReference type="InterPro" id="IPR050509">
    <property type="entry name" value="CoA-transferase_III"/>
</dbReference>
<dbReference type="InterPro" id="IPR003673">
    <property type="entry name" value="CoA-Trfase_fam_III"/>
</dbReference>
<dbReference type="InterPro" id="IPR044855">
    <property type="entry name" value="CoA-Trfase_III_dom3_sf"/>
</dbReference>
<dbReference type="InterPro" id="IPR023606">
    <property type="entry name" value="CoA-Trfase_III_dom_1_sf"/>
</dbReference>
<dbReference type="PANTHER" id="PTHR48228:SF6">
    <property type="entry name" value="L-CARNITINE COA-TRANSFERASE"/>
    <property type="match status" value="1"/>
</dbReference>
<dbReference type="PANTHER" id="PTHR48228">
    <property type="entry name" value="SUCCINYL-COA--D-CITRAMALATE COA-TRANSFERASE"/>
    <property type="match status" value="1"/>
</dbReference>
<dbReference type="Pfam" id="PF02515">
    <property type="entry name" value="CoA_transf_3"/>
    <property type="match status" value="1"/>
</dbReference>
<dbReference type="SUPFAM" id="SSF89796">
    <property type="entry name" value="CoA-transferase family III (CaiB/BaiF)"/>
    <property type="match status" value="1"/>
</dbReference>
<gene>
    <name type="primary">smtA</name>
</gene>
<name>SMTA_CHLAU</name>